<accession>Q9MUZ6</accession>
<gene>
    <name evidence="1" type="primary">matK</name>
</gene>
<evidence type="ECO:0000255" key="1">
    <source>
        <dbReference type="HAMAP-Rule" id="MF_01390"/>
    </source>
</evidence>
<reference key="1">
    <citation type="journal article" date="1999" name="Ann. Mo. Bot. Gard.">
        <title>Phylogeny of Poaceae inferred from matK sequences.</title>
        <authorList>
            <person name="Hilu K.W."/>
            <person name="Alice L.A."/>
            <person name="Liang H."/>
        </authorList>
    </citation>
    <scope>NUCLEOTIDE SEQUENCE [GENOMIC DNA]</scope>
</reference>
<organism>
    <name type="scientific">Avena sativa</name>
    <name type="common">Oat</name>
    <dbReference type="NCBI Taxonomy" id="4498"/>
    <lineage>
        <taxon>Eukaryota</taxon>
        <taxon>Viridiplantae</taxon>
        <taxon>Streptophyta</taxon>
        <taxon>Embryophyta</taxon>
        <taxon>Tracheophyta</taxon>
        <taxon>Spermatophyta</taxon>
        <taxon>Magnoliopsida</taxon>
        <taxon>Liliopsida</taxon>
        <taxon>Poales</taxon>
        <taxon>Poaceae</taxon>
        <taxon>BOP clade</taxon>
        <taxon>Pooideae</taxon>
        <taxon>Poodae</taxon>
        <taxon>Poeae</taxon>
        <taxon>Poeae Chloroplast Group 1 (Aveneae type)</taxon>
        <taxon>Aveninae</taxon>
        <taxon>Avena</taxon>
    </lineage>
</organism>
<keyword id="KW-0150">Chloroplast</keyword>
<keyword id="KW-0507">mRNA processing</keyword>
<keyword id="KW-0934">Plastid</keyword>
<keyword id="KW-0694">RNA-binding</keyword>
<keyword id="KW-0819">tRNA processing</keyword>
<geneLocation type="chloroplast"/>
<proteinExistence type="inferred from homology"/>
<sequence>MEKFEGYSEKHKSCQQYFVYPLLFQEYIYAFAHDYGLNDSEPVEIISCNNKKFSSLLVKRLITRMYQQNFWINSINHPNQDRLLDYKIGFYSEFYSQILPEGFSIVVEIPFSLRELSCPKEKEIPKFQNLRSIHSIFPFLEDKFLHLDSISHIEIPYPIHLEILVQLLQYRIQDVPSLHLLRFFLNYYSNWNSFITSMKSIFLFKKENKRLFRFLYNSYVSEYEFLLVFLRKQSSCLPLSSSGTFLERIIFSRKMEHIGIMYPSFFRKTIWFVMDPLMHYVRYQGKAILASKGTHFLNKKWKWYLINLWQYLFSFWTQPRRVHLNQLANSCFDFLGYLSGVPKSSLLVRNQMLENLFLIDTRMKKLDTIVPVTALIGYLSKAQFCTGSGHPISKPIWTDLSDWDILDRFGRICRNLFHYHSGSSKKQTLYRLKYILRLSCARTLARKHKSTVRTFMQRLGSAFLEEFFTEQELVFSLMFTKTSLFSFRGSHSERIWYFDIIRINDLVKPLN</sequence>
<name>MATK_AVESA</name>
<feature type="chain" id="PRO_0000143270" description="Maturase K">
    <location>
        <begin position="1"/>
        <end position="511"/>
    </location>
</feature>
<protein>
    <recommendedName>
        <fullName evidence="1">Maturase K</fullName>
    </recommendedName>
    <alternativeName>
        <fullName evidence="1">Intron maturase</fullName>
    </alternativeName>
</protein>
<comment type="function">
    <text evidence="1">Usually encoded in the trnK tRNA gene intron. Probably assists in splicing its own and other chloroplast group II introns.</text>
</comment>
<comment type="subcellular location">
    <subcellularLocation>
        <location>Plastid</location>
        <location>Chloroplast</location>
    </subcellularLocation>
</comment>
<comment type="similarity">
    <text evidence="1">Belongs to the intron maturase 2 family. MatK subfamily.</text>
</comment>
<dbReference type="EMBL" id="AF164395">
    <property type="protein sequence ID" value="AAF66182.1"/>
    <property type="molecule type" value="Genomic_DNA"/>
</dbReference>
<dbReference type="GO" id="GO:0009507">
    <property type="term" value="C:chloroplast"/>
    <property type="evidence" value="ECO:0007669"/>
    <property type="project" value="UniProtKB-SubCell"/>
</dbReference>
<dbReference type="GO" id="GO:0003723">
    <property type="term" value="F:RNA binding"/>
    <property type="evidence" value="ECO:0007669"/>
    <property type="project" value="UniProtKB-KW"/>
</dbReference>
<dbReference type="GO" id="GO:0006397">
    <property type="term" value="P:mRNA processing"/>
    <property type="evidence" value="ECO:0007669"/>
    <property type="project" value="UniProtKB-KW"/>
</dbReference>
<dbReference type="GO" id="GO:0008380">
    <property type="term" value="P:RNA splicing"/>
    <property type="evidence" value="ECO:0007669"/>
    <property type="project" value="UniProtKB-UniRule"/>
</dbReference>
<dbReference type="GO" id="GO:0008033">
    <property type="term" value="P:tRNA processing"/>
    <property type="evidence" value="ECO:0007669"/>
    <property type="project" value="UniProtKB-KW"/>
</dbReference>
<dbReference type="HAMAP" id="MF_01390">
    <property type="entry name" value="MatK"/>
    <property type="match status" value="1"/>
</dbReference>
<dbReference type="InterPro" id="IPR024937">
    <property type="entry name" value="Domain_X"/>
</dbReference>
<dbReference type="InterPro" id="IPR002866">
    <property type="entry name" value="Maturase_MatK"/>
</dbReference>
<dbReference type="InterPro" id="IPR024942">
    <property type="entry name" value="Maturase_MatK_N"/>
</dbReference>
<dbReference type="PANTHER" id="PTHR34811">
    <property type="entry name" value="MATURASE K"/>
    <property type="match status" value="1"/>
</dbReference>
<dbReference type="PANTHER" id="PTHR34811:SF1">
    <property type="entry name" value="MATURASE K"/>
    <property type="match status" value="1"/>
</dbReference>
<dbReference type="Pfam" id="PF01348">
    <property type="entry name" value="Intron_maturas2"/>
    <property type="match status" value="1"/>
</dbReference>
<dbReference type="Pfam" id="PF01824">
    <property type="entry name" value="MatK_N"/>
    <property type="match status" value="1"/>
</dbReference>